<proteinExistence type="evidence at transcript level"/>
<feature type="signal peptide" evidence="3">
    <location>
        <begin position="1"/>
        <end position="25"/>
    </location>
</feature>
<feature type="propeptide" id="PRO_0000027069" evidence="3">
    <location>
        <begin position="26"/>
        <end position="109"/>
    </location>
</feature>
<feature type="chain" id="PRO_0000027070" description="Neuroendocrine convertase 2">
    <location>
        <begin position="110"/>
        <end position="638"/>
    </location>
</feature>
<feature type="domain" description="Peptidase S8" evidence="5">
    <location>
        <begin position="129"/>
        <end position="453"/>
    </location>
</feature>
<feature type="domain" description="P/Homo B" evidence="4">
    <location>
        <begin position="461"/>
        <end position="597"/>
    </location>
</feature>
<feature type="active site" description="Charge relay system" evidence="5">
    <location>
        <position position="167"/>
    </location>
</feature>
<feature type="active site" description="Charge relay system" evidence="5">
    <location>
        <position position="208"/>
    </location>
</feature>
<feature type="active site" description="Charge relay system" evidence="5">
    <location>
        <position position="384"/>
    </location>
</feature>
<feature type="glycosylation site" description="N-linked (GlcNAc...) asparagine" evidence="3">
    <location>
        <position position="375"/>
    </location>
</feature>
<feature type="glycosylation site" description="N-linked (GlcNAc...) asparagine" evidence="3">
    <location>
        <position position="514"/>
    </location>
</feature>
<feature type="glycosylation site" description="N-linked (GlcNAc...) asparagine" evidence="3">
    <location>
        <position position="524"/>
    </location>
</feature>
<feature type="disulfide bond" evidence="2">
    <location>
        <begin position="225"/>
        <end position="376"/>
    </location>
</feature>
<feature type="disulfide bond" evidence="2">
    <location>
        <begin position="317"/>
        <end position="347"/>
    </location>
</feature>
<feature type="disulfide bond" evidence="2">
    <location>
        <begin position="468"/>
        <end position="494"/>
    </location>
</feature>
<gene>
    <name type="primary">PCSK2</name>
    <name type="synonym">PC2</name>
</gene>
<name>NEC2_PIG</name>
<evidence type="ECO:0000250" key="1">
    <source>
        <dbReference type="UniProtKB" id="P16519"/>
    </source>
</evidence>
<evidence type="ECO:0000250" key="2">
    <source>
        <dbReference type="UniProtKB" id="P23188"/>
    </source>
</evidence>
<evidence type="ECO:0000255" key="3"/>
<evidence type="ECO:0000255" key="4">
    <source>
        <dbReference type="PROSITE-ProRule" id="PRU01173"/>
    </source>
</evidence>
<evidence type="ECO:0000255" key="5">
    <source>
        <dbReference type="PROSITE-ProRule" id="PRU01240"/>
    </source>
</evidence>
<evidence type="ECO:0000305" key="6"/>
<accession>Q03333</accession>
<keyword id="KW-0165">Cleavage on pair of basic residues</keyword>
<keyword id="KW-0968">Cytoplasmic vesicle</keyword>
<keyword id="KW-1015">Disulfide bond</keyword>
<keyword id="KW-0325">Glycoprotein</keyword>
<keyword id="KW-0378">Hydrolase</keyword>
<keyword id="KW-0645">Protease</keyword>
<keyword id="KW-1185">Reference proteome</keyword>
<keyword id="KW-0964">Secreted</keyword>
<keyword id="KW-0720">Serine protease</keyword>
<keyword id="KW-0732">Signal</keyword>
<keyword id="KW-0865">Zymogen</keyword>
<comment type="function">
    <text evidence="1">Serine endopeptidase which is involved in the processing of hormone and other protein precursors at sites comprised of pairs of basic amino acid residues. Responsible for the release of glucagon from proglucagon in pancreatic A cells (By similarity).</text>
</comment>
<comment type="catalytic activity">
    <reaction>
        <text>Release of protein hormones and neuropeptides from their precursors, generally by hydrolysis of -Lys-Arg-|- bonds.</text>
        <dbReference type="EC" id="3.4.21.94"/>
    </reaction>
</comment>
<comment type="subcellular location">
    <subcellularLocation>
        <location evidence="1">Cytoplasmic vesicle</location>
        <location evidence="1">Secretory vesicle</location>
    </subcellularLocation>
    <subcellularLocation>
        <location evidence="1">Secreted</location>
    </subcellularLocation>
    <text evidence="1">Localized in the secretion granules.</text>
</comment>
<comment type="similarity">
    <text evidence="6">Belongs to the peptidase S8 family. Furin subfamily.</text>
</comment>
<sequence>MKGGCVSQWKAAAGLLFCVTVFASAERPVFTNHFLVELHKGGEEEARQVAAEHGFGVRKLPFAEGLYHFYHNGLAKAKRRRSLHHKQRLERDPRVKRALQQEGFDRKKRGYRDINEIDINMNDPLFTKQWYLINTGQADGTPGLDLNVAEAWELGYTGKGVTIGIMDDGIDYLHPDLASNYNAEASYDFSSNDPYPYPRYTDDWFNSHGTRCAGEVSAAANNNICGVGVAYSSKVAGIRMLDQPFMTDIIEASSISHMPQLIDIYSASWGPTDNGKTVDGPRELTLQAMADGVNKGRGGKGSIYVWASGDGGSYDDCNCDGYASSMWTISINSAINDGRTALYDESCSSTLASTFSNGRKRNPEAGVATTDLYGNCTLRHSGTSAAAPEAAGVFALALEANLGLTWRDMQHLTVLTSKRNQLHDEVHQWRRNGVGLEFNHLFGYGVLDAGAMVKMAKDWKTVPERFHCVGGSVQDPEKIPSTGKLVLTLTTDACEGKENFVRYLEHVQAVITVNATRRGDLNINMTSPMGTKSILLSRRPRDDDSKVGFDKWPFMTTHTWGEDARGTWTLELGFVGSAPQKGAVKEWTLMLHGSQSAPYIDQVVRDYQSKLAMSKKEELEEELDEAVERSLKSILGKH</sequence>
<dbReference type="EC" id="3.4.21.94"/>
<dbReference type="EMBL" id="X68603">
    <property type="protein sequence ID" value="CAA48593.1"/>
    <property type="molecule type" value="mRNA"/>
</dbReference>
<dbReference type="PIR" id="S29244">
    <property type="entry name" value="S29244"/>
</dbReference>
<dbReference type="RefSeq" id="NP_001004044.1">
    <property type="nucleotide sequence ID" value="NM_001004044.1"/>
</dbReference>
<dbReference type="SMR" id="Q03333"/>
<dbReference type="FunCoup" id="Q03333">
    <property type="interactions" value="217"/>
</dbReference>
<dbReference type="STRING" id="9823.ENSSSCP00000007546"/>
<dbReference type="MEROPS" id="S08.073"/>
<dbReference type="GlyCosmos" id="Q03333">
    <property type="glycosylation" value="3 sites, No reported glycans"/>
</dbReference>
<dbReference type="GlyGen" id="Q03333">
    <property type="glycosylation" value="3 sites"/>
</dbReference>
<dbReference type="PaxDb" id="9823-ENSSSCP00000007546"/>
<dbReference type="GeneID" id="445533"/>
<dbReference type="KEGG" id="ssc:445533"/>
<dbReference type="CTD" id="5126"/>
<dbReference type="eggNOG" id="KOG3526">
    <property type="taxonomic scope" value="Eukaryota"/>
</dbReference>
<dbReference type="InParanoid" id="Q03333"/>
<dbReference type="OrthoDB" id="300641at2759"/>
<dbReference type="Proteomes" id="UP000008227">
    <property type="component" value="Unplaced"/>
</dbReference>
<dbReference type="Proteomes" id="UP000314985">
    <property type="component" value="Unplaced"/>
</dbReference>
<dbReference type="Proteomes" id="UP000694570">
    <property type="component" value="Unplaced"/>
</dbReference>
<dbReference type="Proteomes" id="UP000694571">
    <property type="component" value="Unplaced"/>
</dbReference>
<dbReference type="Proteomes" id="UP000694720">
    <property type="component" value="Unplaced"/>
</dbReference>
<dbReference type="Proteomes" id="UP000694722">
    <property type="component" value="Unplaced"/>
</dbReference>
<dbReference type="Proteomes" id="UP000694723">
    <property type="component" value="Unplaced"/>
</dbReference>
<dbReference type="Proteomes" id="UP000694724">
    <property type="component" value="Unplaced"/>
</dbReference>
<dbReference type="Proteomes" id="UP000694725">
    <property type="component" value="Unplaced"/>
</dbReference>
<dbReference type="Proteomes" id="UP000694726">
    <property type="component" value="Unplaced"/>
</dbReference>
<dbReference type="Proteomes" id="UP000694727">
    <property type="component" value="Unplaced"/>
</dbReference>
<dbReference type="Proteomes" id="UP000694728">
    <property type="component" value="Unplaced"/>
</dbReference>
<dbReference type="GO" id="GO:0005615">
    <property type="term" value="C:extracellular space"/>
    <property type="evidence" value="ECO:0000250"/>
    <property type="project" value="UniProtKB"/>
</dbReference>
<dbReference type="GO" id="GO:0016020">
    <property type="term" value="C:membrane"/>
    <property type="evidence" value="ECO:0000318"/>
    <property type="project" value="GO_Central"/>
</dbReference>
<dbReference type="GO" id="GO:0043005">
    <property type="term" value="C:neuron projection"/>
    <property type="evidence" value="ECO:0000318"/>
    <property type="project" value="GO_Central"/>
</dbReference>
<dbReference type="GO" id="GO:0030133">
    <property type="term" value="C:transport vesicle"/>
    <property type="evidence" value="ECO:0007669"/>
    <property type="project" value="UniProtKB-SubCell"/>
</dbReference>
<dbReference type="GO" id="GO:0004252">
    <property type="term" value="F:serine-type endopeptidase activity"/>
    <property type="evidence" value="ECO:0000318"/>
    <property type="project" value="GO_Central"/>
</dbReference>
<dbReference type="GO" id="GO:0016486">
    <property type="term" value="P:peptide hormone processing"/>
    <property type="evidence" value="ECO:0000250"/>
    <property type="project" value="UniProtKB"/>
</dbReference>
<dbReference type="CDD" id="cd04059">
    <property type="entry name" value="Peptidases_S8_Protein_convertases_Kexins_Furin-like"/>
    <property type="match status" value="1"/>
</dbReference>
<dbReference type="FunFam" id="2.60.120.260:FF:000020">
    <property type="entry name" value="neuroendocrine convertase 2"/>
    <property type="match status" value="1"/>
</dbReference>
<dbReference type="FunFam" id="3.30.70.850:FF:000003">
    <property type="entry name" value="neuroendocrine convertase 2 isoform X1"/>
    <property type="match status" value="1"/>
</dbReference>
<dbReference type="FunFam" id="3.40.50.200:FF:000004">
    <property type="entry name" value="Proprotein convertase type 2"/>
    <property type="match status" value="1"/>
</dbReference>
<dbReference type="Gene3D" id="2.60.120.260">
    <property type="entry name" value="Galactose-binding domain-like"/>
    <property type="match status" value="1"/>
</dbReference>
<dbReference type="Gene3D" id="3.30.70.850">
    <property type="entry name" value="Peptidase S8, pro-domain"/>
    <property type="match status" value="1"/>
</dbReference>
<dbReference type="Gene3D" id="3.40.50.200">
    <property type="entry name" value="Peptidase S8/S53 domain"/>
    <property type="match status" value="1"/>
</dbReference>
<dbReference type="InterPro" id="IPR008979">
    <property type="entry name" value="Galactose-bd-like_sf"/>
</dbReference>
<dbReference type="InterPro" id="IPR034182">
    <property type="entry name" value="Kexin/furin"/>
</dbReference>
<dbReference type="InterPro" id="IPR002884">
    <property type="entry name" value="P_dom"/>
</dbReference>
<dbReference type="InterPro" id="IPR000209">
    <property type="entry name" value="Peptidase_S8/S53_dom"/>
</dbReference>
<dbReference type="InterPro" id="IPR036852">
    <property type="entry name" value="Peptidase_S8/S53_dom_sf"/>
</dbReference>
<dbReference type="InterPro" id="IPR023827">
    <property type="entry name" value="Peptidase_S8_Asp-AS"/>
</dbReference>
<dbReference type="InterPro" id="IPR022398">
    <property type="entry name" value="Peptidase_S8_His-AS"/>
</dbReference>
<dbReference type="InterPro" id="IPR023828">
    <property type="entry name" value="Peptidase_S8_Ser-AS"/>
</dbReference>
<dbReference type="InterPro" id="IPR015500">
    <property type="entry name" value="Peptidase_S8_subtilisin-rel"/>
</dbReference>
<dbReference type="InterPro" id="IPR032815">
    <property type="entry name" value="S8_pro-domain"/>
</dbReference>
<dbReference type="InterPro" id="IPR038466">
    <property type="entry name" value="S8_pro-domain_sf"/>
</dbReference>
<dbReference type="PANTHER" id="PTHR42884:SF13">
    <property type="entry name" value="NEUROENDOCRINE CONVERTASE 2"/>
    <property type="match status" value="1"/>
</dbReference>
<dbReference type="PANTHER" id="PTHR42884">
    <property type="entry name" value="PROPROTEIN CONVERTASE SUBTILISIN/KEXIN-RELATED"/>
    <property type="match status" value="1"/>
</dbReference>
<dbReference type="Pfam" id="PF01483">
    <property type="entry name" value="P_proprotein"/>
    <property type="match status" value="1"/>
</dbReference>
<dbReference type="Pfam" id="PF00082">
    <property type="entry name" value="Peptidase_S8"/>
    <property type="match status" value="1"/>
</dbReference>
<dbReference type="Pfam" id="PF16470">
    <property type="entry name" value="S8_pro-domain"/>
    <property type="match status" value="1"/>
</dbReference>
<dbReference type="PRINTS" id="PR00723">
    <property type="entry name" value="SUBTILISIN"/>
</dbReference>
<dbReference type="SUPFAM" id="SSF49785">
    <property type="entry name" value="Galactose-binding domain-like"/>
    <property type="match status" value="1"/>
</dbReference>
<dbReference type="SUPFAM" id="SSF54897">
    <property type="entry name" value="Protease propeptides/inhibitors"/>
    <property type="match status" value="1"/>
</dbReference>
<dbReference type="SUPFAM" id="SSF52743">
    <property type="entry name" value="Subtilisin-like"/>
    <property type="match status" value="1"/>
</dbReference>
<dbReference type="PROSITE" id="PS51829">
    <property type="entry name" value="P_HOMO_B"/>
    <property type="match status" value="1"/>
</dbReference>
<dbReference type="PROSITE" id="PS51892">
    <property type="entry name" value="SUBTILASE"/>
    <property type="match status" value="1"/>
</dbReference>
<dbReference type="PROSITE" id="PS00136">
    <property type="entry name" value="SUBTILASE_ASP"/>
    <property type="match status" value="1"/>
</dbReference>
<dbReference type="PROSITE" id="PS00137">
    <property type="entry name" value="SUBTILASE_HIS"/>
    <property type="match status" value="1"/>
</dbReference>
<dbReference type="PROSITE" id="PS00138">
    <property type="entry name" value="SUBTILASE_SER"/>
    <property type="match status" value="1"/>
</dbReference>
<reference key="1">
    <citation type="journal article" date="1992" name="FEBS Lett.">
        <title>The cDNA structure of the porcine pro-hormone convertase PC2 and the comparative processing by PC1 and PC2 of the N-terminal glycopeptide segment of porcine POMC.</title>
        <authorList>
            <person name="Seidah N.G."/>
            <person name="Fournier H."/>
            <person name="Boileau G."/>
            <person name="Benjannet S."/>
            <person name="Rondeau N."/>
            <person name="Chretien M."/>
        </authorList>
    </citation>
    <scope>NUCLEOTIDE SEQUENCE [MRNA]</scope>
    <source>
        <tissue>Pituitary</tissue>
    </source>
</reference>
<organism>
    <name type="scientific">Sus scrofa</name>
    <name type="common">Pig</name>
    <dbReference type="NCBI Taxonomy" id="9823"/>
    <lineage>
        <taxon>Eukaryota</taxon>
        <taxon>Metazoa</taxon>
        <taxon>Chordata</taxon>
        <taxon>Craniata</taxon>
        <taxon>Vertebrata</taxon>
        <taxon>Euteleostomi</taxon>
        <taxon>Mammalia</taxon>
        <taxon>Eutheria</taxon>
        <taxon>Laurasiatheria</taxon>
        <taxon>Artiodactyla</taxon>
        <taxon>Suina</taxon>
        <taxon>Suidae</taxon>
        <taxon>Sus</taxon>
    </lineage>
</organism>
<protein>
    <recommendedName>
        <fullName>Neuroendocrine convertase 2</fullName>
        <shortName>NEC 2</shortName>
        <ecNumber>3.4.21.94</ecNumber>
    </recommendedName>
    <alternativeName>
        <fullName>KEX2-like endoprotease 2</fullName>
    </alternativeName>
    <alternativeName>
        <fullName>Prohormone convertase 2</fullName>
    </alternativeName>
    <alternativeName>
        <fullName>Proprotein convertase 2</fullName>
        <shortName>PC2</shortName>
    </alternativeName>
</protein>